<reference key="1">
    <citation type="journal article" date="1998" name="DNA Res.">
        <title>Complete sequence and gene organization of the genome of a hyper-thermophilic archaebacterium, Pyrococcus horikoshii OT3.</title>
        <authorList>
            <person name="Kawarabayasi Y."/>
            <person name="Sawada M."/>
            <person name="Horikawa H."/>
            <person name="Haikawa Y."/>
            <person name="Hino Y."/>
            <person name="Yamamoto S."/>
            <person name="Sekine M."/>
            <person name="Baba S."/>
            <person name="Kosugi H."/>
            <person name="Hosoyama A."/>
            <person name="Nagai Y."/>
            <person name="Sakai M."/>
            <person name="Ogura K."/>
            <person name="Otsuka R."/>
            <person name="Nakazawa H."/>
            <person name="Takamiya M."/>
            <person name="Ohfuku Y."/>
            <person name="Funahashi T."/>
            <person name="Tanaka T."/>
            <person name="Kudoh Y."/>
            <person name="Yamazaki J."/>
            <person name="Kushida N."/>
            <person name="Oguchi A."/>
            <person name="Aoki K."/>
            <person name="Yoshizawa T."/>
            <person name="Nakamura Y."/>
            <person name="Robb F.T."/>
            <person name="Horikoshi K."/>
            <person name="Masuchi Y."/>
            <person name="Shizuya H."/>
            <person name="Kikuchi H."/>
        </authorList>
    </citation>
    <scope>NUCLEOTIDE SEQUENCE [LARGE SCALE GENOMIC DNA]</scope>
    <source>
        <strain>ATCC 700860 / DSM 12428 / JCM 9974 / NBRC 100139 / OT-3</strain>
    </source>
</reference>
<gene>
    <name type="primary">nep1</name>
    <name type="ordered locus">PH1379</name>
</gene>
<dbReference type="EC" id="2.1.1.-" evidence="1"/>
<dbReference type="EMBL" id="BA000001">
    <property type="protein sequence ID" value="BAA30485.1"/>
    <property type="molecule type" value="Genomic_DNA"/>
</dbReference>
<dbReference type="PIR" id="E71010">
    <property type="entry name" value="E71010"/>
</dbReference>
<dbReference type="RefSeq" id="WP_010885468.1">
    <property type="nucleotide sequence ID" value="NC_000961.1"/>
</dbReference>
<dbReference type="PDB" id="9JGB">
    <property type="method" value="X-ray"/>
    <property type="resolution" value="3.10 A"/>
    <property type="chains" value="A=1-229"/>
</dbReference>
<dbReference type="PDB" id="9JGC">
    <property type="method" value="X-ray"/>
    <property type="resolution" value="2.01 A"/>
    <property type="chains" value="A=1-229"/>
</dbReference>
<dbReference type="PDB" id="9JGD">
    <property type="method" value="X-ray"/>
    <property type="resolution" value="2.20 A"/>
    <property type="chains" value="A=1-229"/>
</dbReference>
<dbReference type="PDBsum" id="9JGB"/>
<dbReference type="PDBsum" id="9JGC"/>
<dbReference type="PDBsum" id="9JGD"/>
<dbReference type="SMR" id="O50087"/>
<dbReference type="STRING" id="70601.gene:9378355"/>
<dbReference type="EnsemblBacteria" id="BAA30485">
    <property type="protein sequence ID" value="BAA30485"/>
    <property type="gene ID" value="BAA30485"/>
</dbReference>
<dbReference type="GeneID" id="1443706"/>
<dbReference type="KEGG" id="pho:PH1379"/>
<dbReference type="eggNOG" id="arCOG04122">
    <property type="taxonomic scope" value="Archaea"/>
</dbReference>
<dbReference type="OrthoDB" id="7612at2157"/>
<dbReference type="Proteomes" id="UP000000752">
    <property type="component" value="Chromosome"/>
</dbReference>
<dbReference type="GO" id="GO:0070037">
    <property type="term" value="F:rRNA (pseudouridine) methyltransferase activity"/>
    <property type="evidence" value="ECO:0007669"/>
    <property type="project" value="UniProtKB-UniRule"/>
</dbReference>
<dbReference type="GO" id="GO:0019843">
    <property type="term" value="F:rRNA binding"/>
    <property type="evidence" value="ECO:0007669"/>
    <property type="project" value="UniProtKB-UniRule"/>
</dbReference>
<dbReference type="GO" id="GO:0070475">
    <property type="term" value="P:rRNA base methylation"/>
    <property type="evidence" value="ECO:0007669"/>
    <property type="project" value="InterPro"/>
</dbReference>
<dbReference type="CDD" id="cd18088">
    <property type="entry name" value="Nep1-like"/>
    <property type="match status" value="1"/>
</dbReference>
<dbReference type="FunFam" id="3.40.1280.10:FF:000042">
    <property type="entry name" value="Ribosomal RNA small subunit methyltransferase Nep1"/>
    <property type="match status" value="1"/>
</dbReference>
<dbReference type="Gene3D" id="3.40.1280.10">
    <property type="match status" value="1"/>
</dbReference>
<dbReference type="HAMAP" id="MF_00554">
    <property type="entry name" value="NEP1"/>
    <property type="match status" value="1"/>
</dbReference>
<dbReference type="InterPro" id="IPR029028">
    <property type="entry name" value="Alpha/beta_knot_MTases"/>
</dbReference>
<dbReference type="InterPro" id="IPR005304">
    <property type="entry name" value="Rbsml_bgen_MeTrfase_EMG1/NEP1"/>
</dbReference>
<dbReference type="InterPro" id="IPR023503">
    <property type="entry name" value="Ribosome_NEP1_arc"/>
</dbReference>
<dbReference type="InterPro" id="IPR029026">
    <property type="entry name" value="tRNA_m1G_MTases_N"/>
</dbReference>
<dbReference type="NCBIfam" id="NF003205">
    <property type="entry name" value="PRK04171.1-5"/>
    <property type="match status" value="1"/>
</dbReference>
<dbReference type="NCBIfam" id="NF003207">
    <property type="entry name" value="PRK04171.2-2"/>
    <property type="match status" value="1"/>
</dbReference>
<dbReference type="PANTHER" id="PTHR12636">
    <property type="entry name" value="NEP1/MRA1"/>
    <property type="match status" value="1"/>
</dbReference>
<dbReference type="PANTHER" id="PTHR12636:SF5">
    <property type="entry name" value="RIBOSOMAL RNA SMALL SUBUNIT METHYLTRANSFERASE NEP1"/>
    <property type="match status" value="1"/>
</dbReference>
<dbReference type="Pfam" id="PF03587">
    <property type="entry name" value="EMG1"/>
    <property type="match status" value="1"/>
</dbReference>
<dbReference type="SUPFAM" id="SSF75217">
    <property type="entry name" value="alpha/beta knot"/>
    <property type="match status" value="1"/>
</dbReference>
<keyword id="KW-0002">3D-structure</keyword>
<keyword id="KW-0489">Methyltransferase</keyword>
<keyword id="KW-0690">Ribosome biogenesis</keyword>
<keyword id="KW-0694">RNA-binding</keyword>
<keyword id="KW-0698">rRNA processing</keyword>
<keyword id="KW-0699">rRNA-binding</keyword>
<keyword id="KW-0949">S-adenosyl-L-methionine</keyword>
<keyword id="KW-0808">Transferase</keyword>
<name>NEP1_PYRHO</name>
<sequence>MEEKKRLHLIIADAELETVPPEILDHPAIVNYAKRRKKRPEKIILDSTYHHAALRQLEDGERRGRPDIVHICLLNALDSILNKEDRLRVYVHTRNDYVIYIKPETRLPRNYNRFIGLMENLFEKGAVPEDLELLRMEKKTLNELIEEINPDVVFIMHEEGELMIPKNFGKLLDKFKKPTVIVGGFPHGDFKSKVDGVKISLYREPLMAWTIVNEVIVSYEWEVIKKFKS</sequence>
<organism>
    <name type="scientific">Pyrococcus horikoshii (strain ATCC 700860 / DSM 12428 / JCM 9974 / NBRC 100139 / OT-3)</name>
    <dbReference type="NCBI Taxonomy" id="70601"/>
    <lineage>
        <taxon>Archaea</taxon>
        <taxon>Methanobacteriati</taxon>
        <taxon>Methanobacteriota</taxon>
        <taxon>Thermococci</taxon>
        <taxon>Thermococcales</taxon>
        <taxon>Thermococcaceae</taxon>
        <taxon>Pyrococcus</taxon>
    </lineage>
</organism>
<comment type="function">
    <text evidence="1">Methyltransferase involved in ribosomal biogenesis. Specifically catalyzes the N1-methylation of the pseudouridine corresponding to position 914 in M.jannaschii 16S rRNA.</text>
</comment>
<comment type="catalytic activity">
    <reaction evidence="1">
        <text>a pseudouridine in rRNA + S-adenosyl-L-methionine = an N(1)-methylpseudouridine in rRNA + S-adenosyl-L-homocysteine + H(+)</text>
        <dbReference type="Rhea" id="RHEA:46696"/>
        <dbReference type="Rhea" id="RHEA-COMP:11634"/>
        <dbReference type="Rhea" id="RHEA-COMP:13933"/>
        <dbReference type="ChEBI" id="CHEBI:15378"/>
        <dbReference type="ChEBI" id="CHEBI:57856"/>
        <dbReference type="ChEBI" id="CHEBI:59789"/>
        <dbReference type="ChEBI" id="CHEBI:65314"/>
        <dbReference type="ChEBI" id="CHEBI:74890"/>
    </reaction>
</comment>
<comment type="subunit">
    <text evidence="1">Homodimer.</text>
</comment>
<comment type="similarity">
    <text evidence="2">Belongs to the class IV-like SAM-binding methyltransferase superfamily. RNA methyltransferase NEP1 family.</text>
</comment>
<feature type="chain" id="PRO_0000158620" description="Ribosomal RNA small subunit methyltransferase Nep1">
    <location>
        <begin position="1"/>
        <end position="229"/>
    </location>
</feature>
<feature type="binding site" evidence="1">
    <location>
        <position position="183"/>
    </location>
    <ligand>
        <name>S-adenosyl-L-methionine</name>
        <dbReference type="ChEBI" id="CHEBI:59789"/>
    </ligand>
</feature>
<feature type="binding site" evidence="1">
    <location>
        <position position="188"/>
    </location>
    <ligand>
        <name>S-adenosyl-L-methionine</name>
        <dbReference type="ChEBI" id="CHEBI:59789"/>
    </ligand>
</feature>
<feature type="binding site" evidence="1">
    <location>
        <begin position="201"/>
        <end position="206"/>
    </location>
    <ligand>
        <name>S-adenosyl-L-methionine</name>
        <dbReference type="ChEBI" id="CHEBI:59789"/>
    </ligand>
</feature>
<feature type="site" description="Interaction with substrate rRNA" evidence="1">
    <location>
        <position position="65"/>
    </location>
</feature>
<feature type="site" description="Stabilizes Arg-65" evidence="1">
    <location>
        <position position="67"/>
    </location>
</feature>
<feature type="site" description="Interaction with substrate rRNA" evidence="1">
    <location>
        <position position="106"/>
    </location>
</feature>
<feature type="site" description="Interaction with substrate rRNA" evidence="1">
    <location>
        <position position="109"/>
    </location>
</feature>
<feature type="site" description="Interaction with substrate rRNA" evidence="1">
    <location>
        <position position="113"/>
    </location>
</feature>
<evidence type="ECO:0000255" key="1">
    <source>
        <dbReference type="HAMAP-Rule" id="MF_00554"/>
    </source>
</evidence>
<evidence type="ECO:0000305" key="2"/>
<protein>
    <recommendedName>
        <fullName evidence="1">Ribosomal RNA small subunit methyltransferase Nep1</fullName>
        <ecNumber evidence="1">2.1.1.-</ecNumber>
    </recommendedName>
    <alternativeName>
        <fullName evidence="1">16S rRNA (pseudouridine-N1-)-methyltransferase Nep1</fullName>
    </alternativeName>
</protein>
<accession>O50087</accession>
<proteinExistence type="evidence at protein level"/>